<gene>
    <name evidence="6" type="primary">rfbB</name>
    <name type="ordered locus">STM2097</name>
</gene>
<keyword id="KW-0002">3D-structure</keyword>
<keyword id="KW-0448">Lipopolysaccharide biosynthesis</keyword>
<keyword id="KW-0456">Lyase</keyword>
<keyword id="KW-0520">NAD</keyword>
<keyword id="KW-1185">Reference proteome</keyword>
<name>RMLB_SALTY</name>
<feature type="chain" id="PRO_0000183243" description="dTDP-glucose 4,6-dehydratase">
    <location>
        <begin position="1"/>
        <end position="361"/>
    </location>
</feature>
<feature type="active site" description="Proton donor" evidence="9 11">
    <location>
        <position position="134"/>
    </location>
</feature>
<feature type="active site" description="Proton acceptor" evidence="1">
    <location>
        <position position="135"/>
    </location>
</feature>
<feature type="active site" description="Proton acceptor" evidence="9 11">
    <location>
        <position position="167"/>
    </location>
</feature>
<feature type="binding site" evidence="3 4 10 11 12">
    <location>
        <begin position="11"/>
        <end position="12"/>
    </location>
    <ligand>
        <name>NAD(+)</name>
        <dbReference type="ChEBI" id="CHEBI:57540"/>
    </ligand>
</feature>
<feature type="binding site" evidence="3 4 10 11 12">
    <location>
        <begin position="32"/>
        <end position="35"/>
    </location>
    <ligand>
        <name>NAD(+)</name>
        <dbReference type="ChEBI" id="CHEBI:57540"/>
    </ligand>
</feature>
<feature type="binding site" evidence="3 4 10 11 12">
    <location>
        <begin position="58"/>
        <end position="59"/>
    </location>
    <ligand>
        <name>NAD(+)</name>
        <dbReference type="ChEBI" id="CHEBI:57540"/>
    </ligand>
</feature>
<feature type="binding site" evidence="4 8 10 11 12">
    <location>
        <begin position="80"/>
        <end position="84"/>
    </location>
    <ligand>
        <name>NAD(+)</name>
        <dbReference type="ChEBI" id="CHEBI:57540"/>
    </ligand>
</feature>
<feature type="binding site" evidence="4 11">
    <location>
        <position position="84"/>
    </location>
    <ligand>
        <name>substrate</name>
    </ligand>
</feature>
<feature type="binding site" evidence="3 4 10">
    <location>
        <position position="99"/>
    </location>
    <ligand>
        <name>NAD(+)</name>
        <dbReference type="ChEBI" id="CHEBI:57540"/>
    </ligand>
</feature>
<feature type="binding site" evidence="4 11">
    <location>
        <position position="133"/>
    </location>
    <ligand>
        <name>substrate</name>
    </ligand>
</feature>
<feature type="binding site" evidence="3 4 10 11 12">
    <location>
        <begin position="167"/>
        <end position="171"/>
    </location>
    <ligand>
        <name>NAD(+)</name>
        <dbReference type="ChEBI" id="CHEBI:57540"/>
    </ligand>
</feature>
<feature type="binding site" evidence="4 11">
    <location>
        <position position="196"/>
    </location>
    <ligand>
        <name>substrate</name>
    </ligand>
</feature>
<feature type="binding site" evidence="3 4 10 11 12">
    <location>
        <position position="197"/>
    </location>
    <ligand>
        <name>NAD(+)</name>
        <dbReference type="ChEBI" id="CHEBI:57540"/>
    </ligand>
</feature>
<feature type="binding site" evidence="4 11">
    <location>
        <begin position="206"/>
        <end position="207"/>
    </location>
    <ligand>
        <name>substrate</name>
    </ligand>
</feature>
<feature type="binding site" evidence="4 11">
    <location>
        <begin position="222"/>
        <end position="224"/>
    </location>
    <ligand>
        <name>substrate</name>
    </ligand>
</feature>
<feature type="binding site" evidence="4 11">
    <location>
        <position position="231"/>
    </location>
    <ligand>
        <name>substrate</name>
    </ligand>
</feature>
<feature type="binding site" evidence="4 11">
    <location>
        <position position="266"/>
    </location>
    <ligand>
        <name>substrate</name>
    </ligand>
</feature>
<feature type="binding site" evidence="4 11">
    <location>
        <begin position="296"/>
        <end position="300"/>
    </location>
    <ligand>
        <name>substrate</name>
    </ligand>
</feature>
<feature type="binding site" evidence="4 11">
    <location>
        <position position="357"/>
    </location>
    <ligand>
        <name>substrate</name>
    </ligand>
</feature>
<feature type="strand" evidence="13">
    <location>
        <begin position="2"/>
        <end position="7"/>
    </location>
</feature>
<feature type="helix" evidence="13">
    <location>
        <begin position="11"/>
        <end position="23"/>
    </location>
</feature>
<feature type="strand" evidence="13">
    <location>
        <begin position="27"/>
        <end position="32"/>
    </location>
</feature>
<feature type="helix" evidence="13">
    <location>
        <begin position="40"/>
        <end position="43"/>
    </location>
</feature>
<feature type="turn" evidence="13">
    <location>
        <begin position="44"/>
        <end position="48"/>
    </location>
</feature>
<feature type="strand" evidence="13">
    <location>
        <begin position="52"/>
        <end position="56"/>
    </location>
</feature>
<feature type="helix" evidence="13">
    <location>
        <begin position="62"/>
        <end position="72"/>
    </location>
</feature>
<feature type="strand" evidence="13">
    <location>
        <begin position="75"/>
        <end position="79"/>
    </location>
</feature>
<feature type="helix" evidence="13">
    <location>
        <begin position="86"/>
        <end position="91"/>
    </location>
</feature>
<feature type="helix" evidence="13">
    <location>
        <begin position="94"/>
        <end position="100"/>
    </location>
</feature>
<feature type="helix" evidence="13">
    <location>
        <begin position="102"/>
        <end position="116"/>
    </location>
</feature>
<feature type="helix" evidence="13">
    <location>
        <begin position="120"/>
        <end position="125"/>
    </location>
</feature>
<feature type="strand" evidence="13">
    <location>
        <begin position="127"/>
        <end position="133"/>
    </location>
</feature>
<feature type="helix" evidence="13">
    <location>
        <begin position="134"/>
        <end position="137"/>
    </location>
</feature>
<feature type="helix" evidence="13">
    <location>
        <begin position="143"/>
        <end position="145"/>
    </location>
</feature>
<feature type="helix" evidence="13">
    <location>
        <begin position="166"/>
        <end position="185"/>
    </location>
</feature>
<feature type="strand" evidence="13">
    <location>
        <begin position="189"/>
        <end position="194"/>
    </location>
</feature>
<feature type="strand" evidence="13">
    <location>
        <begin position="196"/>
        <end position="199"/>
    </location>
</feature>
<feature type="helix" evidence="13">
    <location>
        <begin position="207"/>
        <end position="217"/>
    </location>
</feature>
<feature type="strand" evidence="13">
    <location>
        <begin position="221"/>
        <end position="224"/>
    </location>
</feature>
<feature type="strand" evidence="13">
    <location>
        <begin position="230"/>
        <end position="235"/>
    </location>
</feature>
<feature type="helix" evidence="13">
    <location>
        <begin position="236"/>
        <end position="249"/>
    </location>
</feature>
<feature type="strand" evidence="13">
    <location>
        <begin position="255"/>
        <end position="258"/>
    </location>
</feature>
<feature type="strand" evidence="13">
    <location>
        <begin position="263"/>
        <end position="265"/>
    </location>
</feature>
<feature type="helix" evidence="13">
    <location>
        <begin position="266"/>
        <end position="280"/>
    </location>
</feature>
<feature type="helix" evidence="13">
    <location>
        <begin position="287"/>
        <end position="290"/>
    </location>
</feature>
<feature type="strand" evidence="13">
    <location>
        <begin position="291"/>
        <end position="294"/>
    </location>
</feature>
<feature type="helix" evidence="13">
    <location>
        <begin position="309"/>
        <end position="315"/>
    </location>
</feature>
<feature type="helix" evidence="13">
    <location>
        <begin position="323"/>
        <end position="336"/>
    </location>
</feature>
<feature type="helix" evidence="13">
    <location>
        <begin position="338"/>
        <end position="343"/>
    </location>
</feature>
<feature type="helix" evidence="13">
    <location>
        <begin position="347"/>
        <end position="357"/>
    </location>
</feature>
<accession>P26391</accession>
<protein>
    <recommendedName>
        <fullName evidence="5">dTDP-glucose 4,6-dehydratase</fullName>
        <ecNumber evidence="4">4.2.1.46</ecNumber>
    </recommendedName>
</protein>
<dbReference type="EC" id="4.2.1.46" evidence="4"/>
<dbReference type="EMBL" id="X56793">
    <property type="protein sequence ID" value="CAA40115.1"/>
    <property type="molecule type" value="Genomic_DNA"/>
</dbReference>
<dbReference type="EMBL" id="AE006468">
    <property type="protein sequence ID" value="AAL21001.1"/>
    <property type="molecule type" value="Genomic_DNA"/>
</dbReference>
<dbReference type="PIR" id="S15299">
    <property type="entry name" value="S15299"/>
</dbReference>
<dbReference type="RefSeq" id="NP_461042.1">
    <property type="nucleotide sequence ID" value="NC_003197.2"/>
</dbReference>
<dbReference type="RefSeq" id="WP_000697840.1">
    <property type="nucleotide sequence ID" value="NC_003197.2"/>
</dbReference>
<dbReference type="PDB" id="1G1A">
    <property type="method" value="X-ray"/>
    <property type="resolution" value="2.47 A"/>
    <property type="chains" value="A/B/C/D=1-361"/>
</dbReference>
<dbReference type="PDB" id="1KEU">
    <property type="method" value="X-ray"/>
    <property type="resolution" value="2.40 A"/>
    <property type="chains" value="A/B=1-361"/>
</dbReference>
<dbReference type="PDB" id="1KEW">
    <property type="method" value="X-ray"/>
    <property type="resolution" value="1.80 A"/>
    <property type="chains" value="A/B=1-361"/>
</dbReference>
<dbReference type="PDBsum" id="1G1A"/>
<dbReference type="PDBsum" id="1KEU"/>
<dbReference type="PDBsum" id="1KEW"/>
<dbReference type="SMR" id="P26391"/>
<dbReference type="STRING" id="99287.STM2097"/>
<dbReference type="DrugBank" id="DB03751">
    <property type="generic name" value="2'deoxy-Thymidine-5'-Diphospho-Alpha-D-Glucose"/>
</dbReference>
<dbReference type="PaxDb" id="99287-STM2097"/>
<dbReference type="GeneID" id="1253618"/>
<dbReference type="KEGG" id="stm:STM2097"/>
<dbReference type="PATRIC" id="fig|99287.12.peg.2219"/>
<dbReference type="HOGENOM" id="CLU_007383_1_14_6"/>
<dbReference type="OMA" id="EWCQHVQ"/>
<dbReference type="PhylomeDB" id="P26391"/>
<dbReference type="BioCyc" id="SENT99287:STM2097-MONOMER"/>
<dbReference type="SABIO-RK" id="P26391"/>
<dbReference type="UniPathway" id="UPA00124"/>
<dbReference type="UniPathway" id="UPA00281"/>
<dbReference type="EvolutionaryTrace" id="P26391"/>
<dbReference type="Proteomes" id="UP000001014">
    <property type="component" value="Chromosome"/>
</dbReference>
<dbReference type="GO" id="GO:0008460">
    <property type="term" value="F:dTDP-glucose 4,6-dehydratase activity"/>
    <property type="evidence" value="ECO:0000250"/>
    <property type="project" value="UniProtKB"/>
</dbReference>
<dbReference type="GO" id="GO:0070404">
    <property type="term" value="F:NADH binding"/>
    <property type="evidence" value="ECO:0000314"/>
    <property type="project" value="UniProtKB"/>
</dbReference>
<dbReference type="GO" id="GO:0019305">
    <property type="term" value="P:dTDP-rhamnose biosynthetic process"/>
    <property type="evidence" value="ECO:0007669"/>
    <property type="project" value="UniProtKB-UniPathway"/>
</dbReference>
<dbReference type="GO" id="GO:0009103">
    <property type="term" value="P:lipopolysaccharide biosynthetic process"/>
    <property type="evidence" value="ECO:0000250"/>
    <property type="project" value="UniProtKB"/>
</dbReference>
<dbReference type="GO" id="GO:0009243">
    <property type="term" value="P:O antigen biosynthetic process"/>
    <property type="evidence" value="ECO:0007669"/>
    <property type="project" value="UniProtKB-UniPathway"/>
</dbReference>
<dbReference type="GO" id="GO:0000271">
    <property type="term" value="P:polysaccharide biosynthetic process"/>
    <property type="evidence" value="ECO:0000250"/>
    <property type="project" value="UniProtKB"/>
</dbReference>
<dbReference type="CDD" id="cd05246">
    <property type="entry name" value="dTDP_GD_SDR_e"/>
    <property type="match status" value="1"/>
</dbReference>
<dbReference type="FunFam" id="3.40.50.720:FF:000108">
    <property type="entry name" value="dTDP-glucose 4,6-dehydratase"/>
    <property type="match status" value="1"/>
</dbReference>
<dbReference type="Gene3D" id="3.40.50.720">
    <property type="entry name" value="NAD(P)-binding Rossmann-like Domain"/>
    <property type="match status" value="1"/>
</dbReference>
<dbReference type="Gene3D" id="3.90.25.10">
    <property type="entry name" value="UDP-galactose 4-epimerase, domain 1"/>
    <property type="match status" value="1"/>
</dbReference>
<dbReference type="InterPro" id="IPR005888">
    <property type="entry name" value="dTDP_Gluc_deHydtase"/>
</dbReference>
<dbReference type="InterPro" id="IPR016040">
    <property type="entry name" value="NAD(P)-bd_dom"/>
</dbReference>
<dbReference type="InterPro" id="IPR036291">
    <property type="entry name" value="NAD(P)-bd_dom_sf"/>
</dbReference>
<dbReference type="NCBIfam" id="TIGR01181">
    <property type="entry name" value="dTDP_gluc_dehyt"/>
    <property type="match status" value="1"/>
</dbReference>
<dbReference type="NCBIfam" id="NF007490">
    <property type="entry name" value="PRK10084.1"/>
    <property type="match status" value="1"/>
</dbReference>
<dbReference type="PANTHER" id="PTHR43000">
    <property type="entry name" value="DTDP-D-GLUCOSE 4,6-DEHYDRATASE-RELATED"/>
    <property type="match status" value="1"/>
</dbReference>
<dbReference type="Pfam" id="PF16363">
    <property type="entry name" value="GDP_Man_Dehyd"/>
    <property type="match status" value="1"/>
</dbReference>
<dbReference type="SUPFAM" id="SSF51735">
    <property type="entry name" value="NAD(P)-binding Rossmann-fold domains"/>
    <property type="match status" value="1"/>
</dbReference>
<sequence length="361" mass="40719">MKILITGGAGFIGSAVVRHIIKNTQDTVVNIDKLTYAGNLESLSDISESNRYNFEHADICDSAEITRIFEQYQPDAVMHLAAESHVDRSITGPAAFIETNIVGTYALLEVARKYWSALGEDKKNNFRFHHISTDEVYGDLPHPDEVENSVTLPLFTETTAYAPSSPYSASKASSDHLVRAWRRTYGLPTIVTNCSNNYGPYHFPEKLIPLVILNALEGKPLPIYGKGDQIRDWLYVEDHARALHMVVTEGKAGETYNIGGHNEKKNLDVVFTICDLLDEIVPKATSYREQITYVADRPGHDRRYAIDAGKISRELGWKPLETFESGIRKTVEWYLANTQWVNNVKSGAYQSWIEQNYEGRQ</sequence>
<organism>
    <name type="scientific">Salmonella typhimurium (strain LT2 / SGSC1412 / ATCC 700720)</name>
    <dbReference type="NCBI Taxonomy" id="99287"/>
    <lineage>
        <taxon>Bacteria</taxon>
        <taxon>Pseudomonadati</taxon>
        <taxon>Pseudomonadota</taxon>
        <taxon>Gammaproteobacteria</taxon>
        <taxon>Enterobacterales</taxon>
        <taxon>Enterobacteriaceae</taxon>
        <taxon>Salmonella</taxon>
    </lineage>
</organism>
<reference key="1">
    <citation type="journal article" date="1991" name="Mol. Microbiol.">
        <title>Structure and sequence of the rfb (O antigen) gene cluster of Salmonella serovar typhimurium (strain LT2).</title>
        <authorList>
            <person name="Jiang X.-M."/>
            <person name="Neal B."/>
            <person name="Santiago F."/>
            <person name="Lee S.J."/>
            <person name="Romana L.K."/>
            <person name="Reeves P.R."/>
        </authorList>
    </citation>
    <scope>NUCLEOTIDE SEQUENCE [GENOMIC DNA]</scope>
    <source>
        <strain>LT2</strain>
    </source>
</reference>
<reference key="2">
    <citation type="journal article" date="2001" name="Nature">
        <title>Complete genome sequence of Salmonella enterica serovar Typhimurium LT2.</title>
        <authorList>
            <person name="McClelland M."/>
            <person name="Sanderson K.E."/>
            <person name="Spieth J."/>
            <person name="Clifton S.W."/>
            <person name="Latreille P."/>
            <person name="Courtney L."/>
            <person name="Porwollik S."/>
            <person name="Ali J."/>
            <person name="Dante M."/>
            <person name="Du F."/>
            <person name="Hou S."/>
            <person name="Layman D."/>
            <person name="Leonard S."/>
            <person name="Nguyen C."/>
            <person name="Scott K."/>
            <person name="Holmes A."/>
            <person name="Grewal N."/>
            <person name="Mulvaney E."/>
            <person name="Ryan E."/>
            <person name="Sun H."/>
            <person name="Florea L."/>
            <person name="Miller W."/>
            <person name="Stoneking T."/>
            <person name="Nhan M."/>
            <person name="Waterston R."/>
            <person name="Wilson R.K."/>
        </authorList>
    </citation>
    <scope>NUCLEOTIDE SEQUENCE [LARGE SCALE GENOMIC DNA]</scope>
    <source>
        <strain>LT2 / SGSC1412 / ATCC 700720</strain>
    </source>
</reference>
<reference key="3">
    <citation type="journal article" date="2001" name="J. Mol. Biol.">
        <title>The crystal structure of dTDP-D-Glucose 4,6-dehydratase (RmlB) from Salmonella enterica serovar Typhimurium, the second enzyme in the dTDP-l-rhamnose pathway.</title>
        <authorList>
            <person name="Allard S.T."/>
            <person name="Giraud M.F."/>
            <person name="Whitfield C."/>
            <person name="Graninger M."/>
            <person name="Messner P."/>
            <person name="Naismith J.H."/>
        </authorList>
    </citation>
    <scope>X-RAY CRYSTALLOGRAPHY (2.47 ANGSTROMS) IN COMPLEX WITH NAD</scope>
    <scope>COFACTOR</scope>
    <scope>SUBUNIT</scope>
</reference>
<reference key="4">
    <citation type="journal article" date="2002" name="Structure">
        <title>Toward a structural understanding of the dehydratase mechanism.</title>
        <authorList>
            <person name="Allard S.T."/>
            <person name="Beis K."/>
            <person name="Giraud M.-F."/>
            <person name="Hegeman A.D."/>
            <person name="Gross J.W."/>
            <person name="Wilmouth R.C."/>
            <person name="Whitfield C."/>
            <person name="Graninger M."/>
            <person name="Messner P."/>
            <person name="Allen A.G."/>
            <person name="Maskell D.J."/>
            <person name="Naismith J.H."/>
        </authorList>
    </citation>
    <scope>X-RAY CRYSTALLOGRAPHY (2.4 ANGSTROMS) IN COMPLEX WITH SUBSTRATE AND NAD</scope>
    <scope>FUNCTION AS A DEHYDRATASE</scope>
    <scope>CATALYTIC ACTIVITY</scope>
    <scope>COFACTOR</scope>
    <scope>ACTIVE SITE</scope>
    <scope>REACTION MECHANISM</scope>
    <scope>SUBUNIT</scope>
</reference>
<comment type="function">
    <text evidence="4">Catalyzes the dehydration of dTDP-D-glucose to form dTDP-6-deoxy-D-xylo-4-hexulose via a three-step process involving oxidation, dehydration and reduction.</text>
</comment>
<comment type="catalytic activity">
    <reaction evidence="4">
        <text>dTDP-alpha-D-glucose = dTDP-4-dehydro-6-deoxy-alpha-D-glucose + H2O</text>
        <dbReference type="Rhea" id="RHEA:17221"/>
        <dbReference type="ChEBI" id="CHEBI:15377"/>
        <dbReference type="ChEBI" id="CHEBI:57477"/>
        <dbReference type="ChEBI" id="CHEBI:57649"/>
        <dbReference type="EC" id="4.2.1.46"/>
    </reaction>
</comment>
<comment type="cofactor">
    <cofactor evidence="3 4">
        <name>NAD(+)</name>
        <dbReference type="ChEBI" id="CHEBI:57540"/>
    </cofactor>
    <text evidence="3 4">Binds 1 NAD(+) per subunit.</text>
</comment>
<comment type="pathway">
    <text evidence="2">Carbohydrate biosynthesis; dTDP-L-rhamnose biosynthesis.</text>
</comment>
<comment type="pathway">
    <text evidence="2">Bacterial outer membrane biogenesis; LPS O-antigen biosynthesis.</text>
</comment>
<comment type="subunit">
    <text evidence="3 4">Homodimer.</text>
</comment>
<comment type="similarity">
    <text evidence="7">Belongs to the NAD(P)-dependent epimerase/dehydratase family. dTDP-glucose dehydratase subfamily.</text>
</comment>
<evidence type="ECO:0000250" key="1">
    <source>
        <dbReference type="UniProtKB" id="P27830"/>
    </source>
</evidence>
<evidence type="ECO:0000250" key="2">
    <source>
        <dbReference type="UniProtKB" id="P37759"/>
    </source>
</evidence>
<evidence type="ECO:0000269" key="3">
    <source>
    </source>
</evidence>
<evidence type="ECO:0000269" key="4">
    <source>
    </source>
</evidence>
<evidence type="ECO:0000303" key="5">
    <source>
    </source>
</evidence>
<evidence type="ECO:0000303" key="6">
    <source>
    </source>
</evidence>
<evidence type="ECO:0000305" key="7"/>
<evidence type="ECO:0000305" key="8">
    <source>
    </source>
</evidence>
<evidence type="ECO:0000305" key="9">
    <source>
    </source>
</evidence>
<evidence type="ECO:0007744" key="10">
    <source>
        <dbReference type="PDB" id="1G1A"/>
    </source>
</evidence>
<evidence type="ECO:0007744" key="11">
    <source>
        <dbReference type="PDB" id="1KEU"/>
    </source>
</evidence>
<evidence type="ECO:0007744" key="12">
    <source>
        <dbReference type="PDB" id="1KEW"/>
    </source>
</evidence>
<evidence type="ECO:0007829" key="13">
    <source>
        <dbReference type="PDB" id="1KEW"/>
    </source>
</evidence>
<proteinExistence type="evidence at protein level"/>